<keyword id="KW-1185">Reference proteome</keyword>
<keyword id="KW-0687">Ribonucleoprotein</keyword>
<keyword id="KW-0689">Ribosomal protein</keyword>
<gene>
    <name evidence="1" type="primary">rplL</name>
    <name type="ordered locus">BT_2735</name>
</gene>
<organism>
    <name type="scientific">Bacteroides thetaiotaomicron (strain ATCC 29148 / DSM 2079 / JCM 5827 / CCUG 10774 / NCTC 10582 / VPI-5482 / E50)</name>
    <dbReference type="NCBI Taxonomy" id="226186"/>
    <lineage>
        <taxon>Bacteria</taxon>
        <taxon>Pseudomonadati</taxon>
        <taxon>Bacteroidota</taxon>
        <taxon>Bacteroidia</taxon>
        <taxon>Bacteroidales</taxon>
        <taxon>Bacteroidaceae</taxon>
        <taxon>Bacteroides</taxon>
    </lineage>
</organism>
<accession>Q8A468</accession>
<name>RL7_BACTN</name>
<evidence type="ECO:0000255" key="1">
    <source>
        <dbReference type="HAMAP-Rule" id="MF_00368"/>
    </source>
</evidence>
<evidence type="ECO:0000305" key="2"/>
<sequence length="124" mass="12680">MADLKAFAEQLVNLTVKEVNELATILKEEYGIEPAAAAVAVAAGPAAGAAAVEEKTSFDVVLKSAGAAKLQVVKAVKEACGLGLKEAKDMVDGAPSVVKEGLAKDEAESLKKTLEEAGAEVELK</sequence>
<feature type="chain" id="PRO_0000243387" description="Large ribosomal subunit protein bL12">
    <location>
        <begin position="1"/>
        <end position="124"/>
    </location>
</feature>
<reference key="1">
    <citation type="journal article" date="2003" name="Science">
        <title>A genomic view of the human-Bacteroides thetaiotaomicron symbiosis.</title>
        <authorList>
            <person name="Xu J."/>
            <person name="Bjursell M.K."/>
            <person name="Himrod J."/>
            <person name="Deng S."/>
            <person name="Carmichael L.K."/>
            <person name="Chiang H.C."/>
            <person name="Hooper L.V."/>
            <person name="Gordon J.I."/>
        </authorList>
    </citation>
    <scope>NUCLEOTIDE SEQUENCE [LARGE SCALE GENOMIC DNA]</scope>
    <source>
        <strain>ATCC 29148 / DSM 2079 / JCM 5827 / CCUG 10774 / NCTC 10582 / VPI-5482 / E50</strain>
    </source>
</reference>
<comment type="function">
    <text evidence="1">Forms part of the ribosomal stalk which helps the ribosome interact with GTP-bound translation factors. Is thus essential for accurate translation.</text>
</comment>
<comment type="subunit">
    <text evidence="1">Homodimer. Part of the ribosomal stalk of the 50S ribosomal subunit. Forms a multimeric L10(L12)X complex, where L10 forms an elongated spine to which 2 to 4 L12 dimers bind in a sequential fashion. Binds GTP-bound translation factors.</text>
</comment>
<comment type="similarity">
    <text evidence="1">Belongs to the bacterial ribosomal protein bL12 family.</text>
</comment>
<dbReference type="EMBL" id="AE015928">
    <property type="protein sequence ID" value="AAO77841.1"/>
    <property type="molecule type" value="Genomic_DNA"/>
</dbReference>
<dbReference type="RefSeq" id="NP_811647.1">
    <property type="nucleotide sequence ID" value="NC_004663.1"/>
</dbReference>
<dbReference type="RefSeq" id="WP_002558082.1">
    <property type="nucleotide sequence ID" value="NZ_UYXG01000001.1"/>
</dbReference>
<dbReference type="SMR" id="Q8A468"/>
<dbReference type="FunCoup" id="Q8A468">
    <property type="interactions" value="642"/>
</dbReference>
<dbReference type="STRING" id="226186.BT_2735"/>
<dbReference type="PaxDb" id="226186-BT_2735"/>
<dbReference type="EnsemblBacteria" id="AAO77841">
    <property type="protein sequence ID" value="AAO77841"/>
    <property type="gene ID" value="BT_2735"/>
</dbReference>
<dbReference type="GeneID" id="69587595"/>
<dbReference type="KEGG" id="bth:BT_2735"/>
<dbReference type="PATRIC" id="fig|226186.12.peg.2778"/>
<dbReference type="eggNOG" id="COG0222">
    <property type="taxonomic scope" value="Bacteria"/>
</dbReference>
<dbReference type="HOGENOM" id="CLU_086499_3_1_10"/>
<dbReference type="InParanoid" id="Q8A468"/>
<dbReference type="OrthoDB" id="9811748at2"/>
<dbReference type="Proteomes" id="UP000001414">
    <property type="component" value="Chromosome"/>
</dbReference>
<dbReference type="GO" id="GO:0022625">
    <property type="term" value="C:cytosolic large ribosomal subunit"/>
    <property type="evidence" value="ECO:0000318"/>
    <property type="project" value="GO_Central"/>
</dbReference>
<dbReference type="GO" id="GO:0003729">
    <property type="term" value="F:mRNA binding"/>
    <property type="evidence" value="ECO:0000318"/>
    <property type="project" value="GO_Central"/>
</dbReference>
<dbReference type="GO" id="GO:0003735">
    <property type="term" value="F:structural constituent of ribosome"/>
    <property type="evidence" value="ECO:0000318"/>
    <property type="project" value="GO_Central"/>
</dbReference>
<dbReference type="GO" id="GO:0006412">
    <property type="term" value="P:translation"/>
    <property type="evidence" value="ECO:0000318"/>
    <property type="project" value="GO_Central"/>
</dbReference>
<dbReference type="CDD" id="cd00387">
    <property type="entry name" value="Ribosomal_L7_L12"/>
    <property type="match status" value="1"/>
</dbReference>
<dbReference type="FunFam" id="1.20.5.710:FF:000011">
    <property type="entry name" value="50S ribosomal protein L7/L12"/>
    <property type="match status" value="1"/>
</dbReference>
<dbReference type="FunFam" id="3.30.1390.10:FF:000001">
    <property type="entry name" value="50S ribosomal protein L7/L12"/>
    <property type="match status" value="1"/>
</dbReference>
<dbReference type="Gene3D" id="3.30.1390.10">
    <property type="match status" value="1"/>
</dbReference>
<dbReference type="Gene3D" id="1.20.5.710">
    <property type="entry name" value="Single helix bin"/>
    <property type="match status" value="1"/>
</dbReference>
<dbReference type="HAMAP" id="MF_00368">
    <property type="entry name" value="Ribosomal_bL12"/>
    <property type="match status" value="1"/>
</dbReference>
<dbReference type="InterPro" id="IPR000206">
    <property type="entry name" value="Ribosomal_bL12"/>
</dbReference>
<dbReference type="InterPro" id="IPR013823">
    <property type="entry name" value="Ribosomal_bL12_C"/>
</dbReference>
<dbReference type="InterPro" id="IPR014719">
    <property type="entry name" value="Ribosomal_bL12_C/ClpS-like"/>
</dbReference>
<dbReference type="InterPro" id="IPR008932">
    <property type="entry name" value="Ribosomal_bL12_oligo"/>
</dbReference>
<dbReference type="InterPro" id="IPR036235">
    <property type="entry name" value="Ribosomal_bL12_oligo_N_sf"/>
</dbReference>
<dbReference type="NCBIfam" id="TIGR00855">
    <property type="entry name" value="L12"/>
    <property type="match status" value="1"/>
</dbReference>
<dbReference type="PANTHER" id="PTHR45987">
    <property type="entry name" value="39S RIBOSOMAL PROTEIN L12"/>
    <property type="match status" value="1"/>
</dbReference>
<dbReference type="PANTHER" id="PTHR45987:SF4">
    <property type="entry name" value="LARGE RIBOSOMAL SUBUNIT PROTEIN BL12M"/>
    <property type="match status" value="1"/>
</dbReference>
<dbReference type="Pfam" id="PF00542">
    <property type="entry name" value="Ribosomal_L12"/>
    <property type="match status" value="1"/>
</dbReference>
<dbReference type="Pfam" id="PF16320">
    <property type="entry name" value="Ribosomal_L12_N"/>
    <property type="match status" value="1"/>
</dbReference>
<dbReference type="SUPFAM" id="SSF54736">
    <property type="entry name" value="ClpS-like"/>
    <property type="match status" value="1"/>
</dbReference>
<dbReference type="SUPFAM" id="SSF48300">
    <property type="entry name" value="Ribosomal protein L7/12, oligomerisation (N-terminal) domain"/>
    <property type="match status" value="1"/>
</dbReference>
<protein>
    <recommendedName>
        <fullName evidence="1">Large ribosomal subunit protein bL12</fullName>
    </recommendedName>
    <alternativeName>
        <fullName evidence="2">50S ribosomal protein L7/L12</fullName>
    </alternativeName>
</protein>
<proteinExistence type="inferred from homology"/>